<protein>
    <recommendedName>
        <fullName evidence="1">AdoMet-dependent rRNA methyltransferase SPB1</fullName>
        <ecNumber evidence="1">2.1.1.-</ecNumber>
    </recommendedName>
    <alternativeName>
        <fullName evidence="1">2'-O-ribose RNA methyltransferase</fullName>
    </alternativeName>
    <alternativeName>
        <fullName evidence="1">S-adenosyl-L-methionine-dependent methyltransferase</fullName>
    </alternativeName>
</protein>
<sequence length="831" mass="95072">MGKTQKKNSKGRLDRYYYLAKEKGYRARSSFKIIQINEKYGHFLEKSKVVIDLCAAPGSWCQVASQLCPINSLIIGVDIVPIKALPNCITFQSDITTEDCRSQLRGHMKTWKADTVLHDGAPNVGLGWVQDAFTQSHLTLQALKLAVENLNTGGTFVTKIFRSRDYNNLMWVFQQLFEKVEATKPPASRNVSAEIFVVCKGYKSPKKMDPRLLDPREVFEELPTGPDNNEAKIFNPEKKVRRRQGYEEGDYTLFHEMPLLEFIKNEDPINTLGTLNKLSEPPQDDHEWKILKKSKLCTPELLECIKDLKVLGRKDFKHLLKFRKQARDLLGLDAKEETQEIEVEPLTEDQQIEKELQELTEKQKQKARKAKKQSNEIKQKEIQRSQMNMLTDMNIGIEAAQIGAESLFNLKTAIKTGQLEKLSKGKKKMIFNDEEIMKDNDINFDEEADANSEDEIDELEAQLDDMYNSYQNRRAERDANYRAKKLRGDVDDEGWEGIESDKEGSDKETEANDYEMESESDSDDDEHIQRIADQRKKELSKNAKVFFASNSIFGELGDEALLEEMNKKEAKTNQVTNENAVGHANDISNKPEQMEVDSSDSENDVSDDSDFEIVPNAPDEELSDSDSDNENDVSRKYSKAKDQQSKVDIATVEAMTLAHQVALGHKNKHDLVNEGIHKYSFRDHDDLPEWFVDDEKRNSKIVKPITKEAALAIKEKQKQLNARPIKKVLEAQGRKKLRALKRLEKLKKKSDMINEDSAKSERDKADEIQKLMKKLTKKQKTKPKATLVVARGSNRGLSGRPKGVKGKYKMVDGVMKNEQRALKRIAKKHKK</sequence>
<gene>
    <name evidence="1" type="primary">SPB1</name>
    <name type="ordered locus">DEHA2E19690g</name>
</gene>
<keyword id="KW-0175">Coiled coil</keyword>
<keyword id="KW-0489">Methyltransferase</keyword>
<keyword id="KW-0539">Nucleus</keyword>
<keyword id="KW-1185">Reference proteome</keyword>
<keyword id="KW-0690">Ribosome biogenesis</keyword>
<keyword id="KW-0698">rRNA processing</keyword>
<keyword id="KW-0949">S-adenosyl-L-methionine</keyword>
<keyword id="KW-0808">Transferase</keyword>
<feature type="chain" id="PRO_0000155596" description="AdoMet-dependent rRNA methyltransferase SPB1">
    <location>
        <begin position="1"/>
        <end position="831"/>
    </location>
</feature>
<feature type="region of interest" description="Disordered" evidence="2">
    <location>
        <begin position="492"/>
        <end position="535"/>
    </location>
</feature>
<feature type="region of interest" description="Disordered" evidence="2">
    <location>
        <begin position="565"/>
        <end position="645"/>
    </location>
</feature>
<feature type="coiled-coil region" evidence="1">
    <location>
        <begin position="346"/>
        <end position="389"/>
    </location>
</feature>
<feature type="coiled-coil region" evidence="1">
    <location>
        <begin position="440"/>
        <end position="479"/>
    </location>
</feature>
<feature type="coiled-coil region" evidence="1">
    <location>
        <begin position="729"/>
        <end position="782"/>
    </location>
</feature>
<feature type="compositionally biased region" description="Basic and acidic residues" evidence="2">
    <location>
        <begin position="499"/>
        <end position="510"/>
    </location>
</feature>
<feature type="compositionally biased region" description="Acidic residues" evidence="2">
    <location>
        <begin position="511"/>
        <end position="526"/>
    </location>
</feature>
<feature type="compositionally biased region" description="Acidic residues" evidence="2">
    <location>
        <begin position="594"/>
        <end position="611"/>
    </location>
</feature>
<feature type="compositionally biased region" description="Acidic residues" evidence="2">
    <location>
        <begin position="618"/>
        <end position="631"/>
    </location>
</feature>
<feature type="compositionally biased region" description="Basic and acidic residues" evidence="2">
    <location>
        <begin position="632"/>
        <end position="645"/>
    </location>
</feature>
<feature type="active site" description="Proton acceptor" evidence="1">
    <location>
        <position position="159"/>
    </location>
</feature>
<feature type="binding site" evidence="1">
    <location>
        <position position="58"/>
    </location>
    <ligand>
        <name>S-adenosyl-L-methionine</name>
        <dbReference type="ChEBI" id="CHEBI:59789"/>
    </ligand>
</feature>
<feature type="binding site" evidence="1">
    <location>
        <position position="60"/>
    </location>
    <ligand>
        <name>S-adenosyl-L-methionine</name>
        <dbReference type="ChEBI" id="CHEBI:59789"/>
    </ligand>
</feature>
<feature type="binding site" evidence="1">
    <location>
        <position position="78"/>
    </location>
    <ligand>
        <name>S-adenosyl-L-methionine</name>
        <dbReference type="ChEBI" id="CHEBI:59789"/>
    </ligand>
</feature>
<feature type="binding site" evidence="1">
    <location>
        <position position="94"/>
    </location>
    <ligand>
        <name>S-adenosyl-L-methionine</name>
        <dbReference type="ChEBI" id="CHEBI:59789"/>
    </ligand>
</feature>
<feature type="binding site" evidence="1">
    <location>
        <position position="119"/>
    </location>
    <ligand>
        <name>S-adenosyl-L-methionine</name>
        <dbReference type="ChEBI" id="CHEBI:59789"/>
    </ligand>
</feature>
<organism>
    <name type="scientific">Debaryomyces hansenii (strain ATCC 36239 / CBS 767 / BCRC 21394 / JCM 1990 / NBRC 0083 / IGC 2968)</name>
    <name type="common">Yeast</name>
    <name type="synonym">Torulaspora hansenii</name>
    <dbReference type="NCBI Taxonomy" id="284592"/>
    <lineage>
        <taxon>Eukaryota</taxon>
        <taxon>Fungi</taxon>
        <taxon>Dikarya</taxon>
        <taxon>Ascomycota</taxon>
        <taxon>Saccharomycotina</taxon>
        <taxon>Pichiomycetes</taxon>
        <taxon>Debaryomycetaceae</taxon>
        <taxon>Debaryomyces</taxon>
    </lineage>
</organism>
<dbReference type="EC" id="2.1.1.-" evidence="1"/>
<dbReference type="EMBL" id="CR382137">
    <property type="protein sequence ID" value="CAG88435.2"/>
    <property type="molecule type" value="Genomic_DNA"/>
</dbReference>
<dbReference type="RefSeq" id="XP_460162.2">
    <property type="nucleotide sequence ID" value="XM_460162.1"/>
</dbReference>
<dbReference type="SMR" id="Q6BNQ8"/>
<dbReference type="FunCoup" id="Q6BNQ8">
    <property type="interactions" value="1201"/>
</dbReference>
<dbReference type="STRING" id="284592.Q6BNQ8"/>
<dbReference type="GeneID" id="2902988"/>
<dbReference type="KEGG" id="dha:DEHA2E19690g"/>
<dbReference type="VEuPathDB" id="FungiDB:DEHA2E19690g"/>
<dbReference type="eggNOG" id="KOG1098">
    <property type="taxonomic scope" value="Eukaryota"/>
</dbReference>
<dbReference type="HOGENOM" id="CLU_009422_8_1_1"/>
<dbReference type="InParanoid" id="Q6BNQ8"/>
<dbReference type="OMA" id="QRKDKYY"/>
<dbReference type="OrthoDB" id="1287559at2759"/>
<dbReference type="Proteomes" id="UP000000599">
    <property type="component" value="Chromosome E"/>
</dbReference>
<dbReference type="GO" id="GO:0005730">
    <property type="term" value="C:nucleolus"/>
    <property type="evidence" value="ECO:0007669"/>
    <property type="project" value="UniProtKB-SubCell"/>
</dbReference>
<dbReference type="GO" id="GO:0030687">
    <property type="term" value="C:preribosome, large subunit precursor"/>
    <property type="evidence" value="ECO:0007669"/>
    <property type="project" value="UniProtKB-UniRule"/>
</dbReference>
<dbReference type="GO" id="GO:0070039">
    <property type="term" value="F:rRNA (guanosine-2'-O-)-methyltransferase activity"/>
    <property type="evidence" value="ECO:0007669"/>
    <property type="project" value="UniProtKB-UniRule"/>
</dbReference>
<dbReference type="GO" id="GO:0008650">
    <property type="term" value="F:rRNA (uridine-2'-O-)-methyltransferase activity"/>
    <property type="evidence" value="ECO:0007669"/>
    <property type="project" value="UniProtKB-UniRule"/>
</dbReference>
<dbReference type="GO" id="GO:0000466">
    <property type="term" value="P:maturation of 5.8S rRNA from tricistronic rRNA transcript (SSU-rRNA, 5.8S rRNA, LSU-rRNA)"/>
    <property type="evidence" value="ECO:0007669"/>
    <property type="project" value="EnsemblFungi"/>
</dbReference>
<dbReference type="GO" id="GO:0000463">
    <property type="term" value="P:maturation of LSU-rRNA from tricistronic rRNA transcript (SSU-rRNA, 5.8S rRNA, LSU-rRNA)"/>
    <property type="evidence" value="ECO:0007669"/>
    <property type="project" value="EnsemblFungi"/>
</dbReference>
<dbReference type="FunFam" id="3.40.50.150:FF:000004">
    <property type="entry name" value="AdoMet-dependent rRNA methyltransferase SPB1"/>
    <property type="match status" value="1"/>
</dbReference>
<dbReference type="Gene3D" id="3.40.50.150">
    <property type="entry name" value="Vaccinia Virus protein VP39"/>
    <property type="match status" value="1"/>
</dbReference>
<dbReference type="HAMAP" id="MF_01547">
    <property type="entry name" value="RNA_methyltr_E"/>
    <property type="match status" value="1"/>
</dbReference>
<dbReference type="HAMAP" id="MF_03163">
    <property type="entry name" value="RNA_methyltr_E_SPB1"/>
    <property type="match status" value="1"/>
</dbReference>
<dbReference type="InterPro" id="IPR050082">
    <property type="entry name" value="RNA_methyltr_RlmE"/>
</dbReference>
<dbReference type="InterPro" id="IPR002877">
    <property type="entry name" value="RNA_MeTrfase_FtsJ_dom"/>
</dbReference>
<dbReference type="InterPro" id="IPR015507">
    <property type="entry name" value="rRNA-MeTfrase_E"/>
</dbReference>
<dbReference type="InterPro" id="IPR012920">
    <property type="entry name" value="rRNA_MeTfrase_SPB1-like_C"/>
</dbReference>
<dbReference type="InterPro" id="IPR024576">
    <property type="entry name" value="rRNA_MeTfrase_Spb1_DUF3381"/>
</dbReference>
<dbReference type="InterPro" id="IPR029063">
    <property type="entry name" value="SAM-dependent_MTases_sf"/>
</dbReference>
<dbReference type="InterPro" id="IPR028589">
    <property type="entry name" value="SPB1-like"/>
</dbReference>
<dbReference type="PANTHER" id="PTHR10920:SF13">
    <property type="entry name" value="PRE-RRNA 2'-O-RIBOSE RNA METHYLTRANSFERASE FTSJ3"/>
    <property type="match status" value="1"/>
</dbReference>
<dbReference type="PANTHER" id="PTHR10920">
    <property type="entry name" value="RIBOSOMAL RNA METHYLTRANSFERASE"/>
    <property type="match status" value="1"/>
</dbReference>
<dbReference type="Pfam" id="PF11861">
    <property type="entry name" value="DUF3381"/>
    <property type="match status" value="1"/>
</dbReference>
<dbReference type="Pfam" id="PF01728">
    <property type="entry name" value="FtsJ"/>
    <property type="match status" value="1"/>
</dbReference>
<dbReference type="Pfam" id="PF07780">
    <property type="entry name" value="Spb1_C"/>
    <property type="match status" value="1"/>
</dbReference>
<dbReference type="SUPFAM" id="SSF53335">
    <property type="entry name" value="S-adenosyl-L-methionine-dependent methyltransferases"/>
    <property type="match status" value="1"/>
</dbReference>
<evidence type="ECO:0000255" key="1">
    <source>
        <dbReference type="HAMAP-Rule" id="MF_03163"/>
    </source>
</evidence>
<evidence type="ECO:0000256" key="2">
    <source>
        <dbReference type="SAM" id="MobiDB-lite"/>
    </source>
</evidence>
<reference key="1">
    <citation type="journal article" date="2004" name="Nature">
        <title>Genome evolution in yeasts.</title>
        <authorList>
            <person name="Dujon B."/>
            <person name="Sherman D."/>
            <person name="Fischer G."/>
            <person name="Durrens P."/>
            <person name="Casaregola S."/>
            <person name="Lafontaine I."/>
            <person name="de Montigny J."/>
            <person name="Marck C."/>
            <person name="Neuveglise C."/>
            <person name="Talla E."/>
            <person name="Goffard N."/>
            <person name="Frangeul L."/>
            <person name="Aigle M."/>
            <person name="Anthouard V."/>
            <person name="Babour A."/>
            <person name="Barbe V."/>
            <person name="Barnay S."/>
            <person name="Blanchin S."/>
            <person name="Beckerich J.-M."/>
            <person name="Beyne E."/>
            <person name="Bleykasten C."/>
            <person name="Boisrame A."/>
            <person name="Boyer J."/>
            <person name="Cattolico L."/>
            <person name="Confanioleri F."/>
            <person name="de Daruvar A."/>
            <person name="Despons L."/>
            <person name="Fabre E."/>
            <person name="Fairhead C."/>
            <person name="Ferry-Dumazet H."/>
            <person name="Groppi A."/>
            <person name="Hantraye F."/>
            <person name="Hennequin C."/>
            <person name="Jauniaux N."/>
            <person name="Joyet P."/>
            <person name="Kachouri R."/>
            <person name="Kerrest A."/>
            <person name="Koszul R."/>
            <person name="Lemaire M."/>
            <person name="Lesur I."/>
            <person name="Ma L."/>
            <person name="Muller H."/>
            <person name="Nicaud J.-M."/>
            <person name="Nikolski M."/>
            <person name="Oztas S."/>
            <person name="Ozier-Kalogeropoulos O."/>
            <person name="Pellenz S."/>
            <person name="Potier S."/>
            <person name="Richard G.-F."/>
            <person name="Straub M.-L."/>
            <person name="Suleau A."/>
            <person name="Swennen D."/>
            <person name="Tekaia F."/>
            <person name="Wesolowski-Louvel M."/>
            <person name="Westhof E."/>
            <person name="Wirth B."/>
            <person name="Zeniou-Meyer M."/>
            <person name="Zivanovic Y."/>
            <person name="Bolotin-Fukuhara M."/>
            <person name="Thierry A."/>
            <person name="Bouchier C."/>
            <person name="Caudron B."/>
            <person name="Scarpelli C."/>
            <person name="Gaillardin C."/>
            <person name="Weissenbach J."/>
            <person name="Wincker P."/>
            <person name="Souciet J.-L."/>
        </authorList>
    </citation>
    <scope>NUCLEOTIDE SEQUENCE [LARGE SCALE GENOMIC DNA]</scope>
    <source>
        <strain>ATCC 36239 / CBS 767 / BCRC 21394 / JCM 1990 / NBRC 0083 / IGC 2968</strain>
    </source>
</reference>
<comment type="function">
    <text evidence="1">Required for proper assembly of pre-ribosomal particles during the biogenesis of the 60S ribosomal subunit.</text>
</comment>
<comment type="catalytic activity">
    <reaction evidence="1">
        <text>a ribonucleotide in rRNA + S-adenosyl-L-methionine = a 2'-O-methylribonucleotide in rRNA + S-adenosyl-L-homocysteine + H(+)</text>
        <dbReference type="Rhea" id="RHEA:48628"/>
        <dbReference type="Rhea" id="RHEA-COMP:12164"/>
        <dbReference type="Rhea" id="RHEA-COMP:12165"/>
        <dbReference type="ChEBI" id="CHEBI:15378"/>
        <dbReference type="ChEBI" id="CHEBI:57856"/>
        <dbReference type="ChEBI" id="CHEBI:59789"/>
        <dbReference type="ChEBI" id="CHEBI:90675"/>
        <dbReference type="ChEBI" id="CHEBI:90676"/>
    </reaction>
</comment>
<comment type="subunit">
    <text evidence="1">Component of the nucleolar and nucleoplasmic pre-60S ribosomal particle.</text>
</comment>
<comment type="subcellular location">
    <subcellularLocation>
        <location evidence="1">Nucleus</location>
        <location evidence="1">Nucleolus</location>
    </subcellularLocation>
</comment>
<comment type="similarity">
    <text evidence="1">Belongs to the class I-like SAM-binding methyltransferase superfamily. RNA methyltransferase RlmE family. SPB1 subfamily.</text>
</comment>
<name>SPB1_DEBHA</name>
<accession>Q6BNQ8</accession>
<proteinExistence type="inferred from homology"/>